<accession>Q1J902</accession>
<feature type="chain" id="PRO_1000052323" description="Large ribosomal subunit protein uL24">
    <location>
        <begin position="1"/>
        <end position="101"/>
    </location>
</feature>
<gene>
    <name evidence="1" type="primary">rplX</name>
    <name type="ordered locus">MGAS10750_Spy0059</name>
</gene>
<evidence type="ECO:0000255" key="1">
    <source>
        <dbReference type="HAMAP-Rule" id="MF_01326"/>
    </source>
</evidence>
<evidence type="ECO:0000305" key="2"/>
<protein>
    <recommendedName>
        <fullName evidence="1">Large ribosomal subunit protein uL24</fullName>
    </recommendedName>
    <alternativeName>
        <fullName evidence="2">50S ribosomal protein L24</fullName>
    </alternativeName>
</protein>
<dbReference type="EMBL" id="CP000262">
    <property type="protein sequence ID" value="ABF37009.1"/>
    <property type="molecule type" value="Genomic_DNA"/>
</dbReference>
<dbReference type="SMR" id="Q1J902"/>
<dbReference type="KEGG" id="spi:MGAS10750_Spy0059"/>
<dbReference type="HOGENOM" id="CLU_093315_2_0_9"/>
<dbReference type="Proteomes" id="UP000002434">
    <property type="component" value="Chromosome"/>
</dbReference>
<dbReference type="GO" id="GO:1990904">
    <property type="term" value="C:ribonucleoprotein complex"/>
    <property type="evidence" value="ECO:0007669"/>
    <property type="project" value="UniProtKB-KW"/>
</dbReference>
<dbReference type="GO" id="GO:0005840">
    <property type="term" value="C:ribosome"/>
    <property type="evidence" value="ECO:0007669"/>
    <property type="project" value="UniProtKB-KW"/>
</dbReference>
<dbReference type="GO" id="GO:0019843">
    <property type="term" value="F:rRNA binding"/>
    <property type="evidence" value="ECO:0007669"/>
    <property type="project" value="UniProtKB-UniRule"/>
</dbReference>
<dbReference type="GO" id="GO:0003735">
    <property type="term" value="F:structural constituent of ribosome"/>
    <property type="evidence" value="ECO:0007669"/>
    <property type="project" value="InterPro"/>
</dbReference>
<dbReference type="GO" id="GO:0006412">
    <property type="term" value="P:translation"/>
    <property type="evidence" value="ECO:0007669"/>
    <property type="project" value="UniProtKB-UniRule"/>
</dbReference>
<dbReference type="CDD" id="cd06089">
    <property type="entry name" value="KOW_RPL26"/>
    <property type="match status" value="1"/>
</dbReference>
<dbReference type="FunFam" id="2.30.30.30:FF:000004">
    <property type="entry name" value="50S ribosomal protein L24"/>
    <property type="match status" value="1"/>
</dbReference>
<dbReference type="Gene3D" id="2.30.30.30">
    <property type="match status" value="1"/>
</dbReference>
<dbReference type="HAMAP" id="MF_01326_B">
    <property type="entry name" value="Ribosomal_uL24_B"/>
    <property type="match status" value="1"/>
</dbReference>
<dbReference type="InterPro" id="IPR005824">
    <property type="entry name" value="KOW"/>
</dbReference>
<dbReference type="InterPro" id="IPR014722">
    <property type="entry name" value="Rib_uL2_dom2"/>
</dbReference>
<dbReference type="InterPro" id="IPR003256">
    <property type="entry name" value="Ribosomal_uL24"/>
</dbReference>
<dbReference type="InterPro" id="IPR005825">
    <property type="entry name" value="Ribosomal_uL24_CS"/>
</dbReference>
<dbReference type="InterPro" id="IPR041988">
    <property type="entry name" value="Ribosomal_uL24_KOW"/>
</dbReference>
<dbReference type="InterPro" id="IPR008991">
    <property type="entry name" value="Translation_prot_SH3-like_sf"/>
</dbReference>
<dbReference type="NCBIfam" id="TIGR01079">
    <property type="entry name" value="rplX_bact"/>
    <property type="match status" value="1"/>
</dbReference>
<dbReference type="PANTHER" id="PTHR12903">
    <property type="entry name" value="MITOCHONDRIAL RIBOSOMAL PROTEIN L24"/>
    <property type="match status" value="1"/>
</dbReference>
<dbReference type="Pfam" id="PF00467">
    <property type="entry name" value="KOW"/>
    <property type="match status" value="1"/>
</dbReference>
<dbReference type="Pfam" id="PF17136">
    <property type="entry name" value="ribosomal_L24"/>
    <property type="match status" value="1"/>
</dbReference>
<dbReference type="SMART" id="SM00739">
    <property type="entry name" value="KOW"/>
    <property type="match status" value="1"/>
</dbReference>
<dbReference type="SUPFAM" id="SSF50104">
    <property type="entry name" value="Translation proteins SH3-like domain"/>
    <property type="match status" value="1"/>
</dbReference>
<dbReference type="PROSITE" id="PS01108">
    <property type="entry name" value="RIBOSOMAL_L24"/>
    <property type="match status" value="1"/>
</dbReference>
<name>RL24_STRPF</name>
<comment type="function">
    <text evidence="1">One of two assembly initiator proteins, it binds directly to the 5'-end of the 23S rRNA, where it nucleates assembly of the 50S subunit.</text>
</comment>
<comment type="function">
    <text evidence="1">One of the proteins that surrounds the polypeptide exit tunnel on the outside of the subunit.</text>
</comment>
<comment type="subunit">
    <text evidence="1">Part of the 50S ribosomal subunit.</text>
</comment>
<comment type="similarity">
    <text evidence="1">Belongs to the universal ribosomal protein uL24 family.</text>
</comment>
<organism>
    <name type="scientific">Streptococcus pyogenes serotype M4 (strain MGAS10750)</name>
    <dbReference type="NCBI Taxonomy" id="370554"/>
    <lineage>
        <taxon>Bacteria</taxon>
        <taxon>Bacillati</taxon>
        <taxon>Bacillota</taxon>
        <taxon>Bacilli</taxon>
        <taxon>Lactobacillales</taxon>
        <taxon>Streptococcaceae</taxon>
        <taxon>Streptococcus</taxon>
    </lineage>
</organism>
<sequence>MFVKKGDKVRVIAGKDKGTEAVVLKALPKVNKVIVEGVGMIKKHQKPNTENPQGAIVEKEAPIHVSNVQVLDKNGVAGRVGYKVVDGKKVRYSKKSGEVLD</sequence>
<reference key="1">
    <citation type="journal article" date="2006" name="Proc. Natl. Acad. Sci. U.S.A.">
        <title>Molecular genetic anatomy of inter- and intraserotype variation in the human bacterial pathogen group A Streptococcus.</title>
        <authorList>
            <person name="Beres S.B."/>
            <person name="Richter E.W."/>
            <person name="Nagiec M.J."/>
            <person name="Sumby P."/>
            <person name="Porcella S.F."/>
            <person name="DeLeo F.R."/>
            <person name="Musser J.M."/>
        </authorList>
    </citation>
    <scope>NUCLEOTIDE SEQUENCE [LARGE SCALE GENOMIC DNA]</scope>
    <source>
        <strain>MGAS10750</strain>
    </source>
</reference>
<keyword id="KW-0687">Ribonucleoprotein</keyword>
<keyword id="KW-0689">Ribosomal protein</keyword>
<keyword id="KW-0694">RNA-binding</keyword>
<keyword id="KW-0699">rRNA-binding</keyword>
<proteinExistence type="inferred from homology"/>